<dbReference type="EC" id="2.7.1.11" evidence="1"/>
<dbReference type="EMBL" id="BA000043">
    <property type="protein sequence ID" value="BAD77025.1"/>
    <property type="molecule type" value="Genomic_DNA"/>
</dbReference>
<dbReference type="RefSeq" id="WP_011232214.1">
    <property type="nucleotide sequence ID" value="NC_006510.1"/>
</dbReference>
<dbReference type="SMR" id="Q5KWB1"/>
<dbReference type="STRING" id="235909.GK2740"/>
<dbReference type="GeneID" id="32064640"/>
<dbReference type="KEGG" id="gka:GK2740"/>
<dbReference type="eggNOG" id="COG0205">
    <property type="taxonomic scope" value="Bacteria"/>
</dbReference>
<dbReference type="HOGENOM" id="CLU_020655_0_1_9"/>
<dbReference type="UniPathway" id="UPA00109">
    <property type="reaction ID" value="UER00182"/>
</dbReference>
<dbReference type="Proteomes" id="UP000001172">
    <property type="component" value="Chromosome"/>
</dbReference>
<dbReference type="GO" id="GO:0005945">
    <property type="term" value="C:6-phosphofructokinase complex"/>
    <property type="evidence" value="ECO:0007669"/>
    <property type="project" value="TreeGrafter"/>
</dbReference>
<dbReference type="GO" id="GO:0003872">
    <property type="term" value="F:6-phosphofructokinase activity"/>
    <property type="evidence" value="ECO:0007669"/>
    <property type="project" value="UniProtKB-UniRule"/>
</dbReference>
<dbReference type="GO" id="GO:0016208">
    <property type="term" value="F:AMP binding"/>
    <property type="evidence" value="ECO:0007669"/>
    <property type="project" value="TreeGrafter"/>
</dbReference>
<dbReference type="GO" id="GO:0005524">
    <property type="term" value="F:ATP binding"/>
    <property type="evidence" value="ECO:0007669"/>
    <property type="project" value="UniProtKB-KW"/>
</dbReference>
<dbReference type="GO" id="GO:0070095">
    <property type="term" value="F:fructose-6-phosphate binding"/>
    <property type="evidence" value="ECO:0007669"/>
    <property type="project" value="TreeGrafter"/>
</dbReference>
<dbReference type="GO" id="GO:0042802">
    <property type="term" value="F:identical protein binding"/>
    <property type="evidence" value="ECO:0007669"/>
    <property type="project" value="TreeGrafter"/>
</dbReference>
<dbReference type="GO" id="GO:0046872">
    <property type="term" value="F:metal ion binding"/>
    <property type="evidence" value="ECO:0007669"/>
    <property type="project" value="UniProtKB-KW"/>
</dbReference>
<dbReference type="GO" id="GO:0048029">
    <property type="term" value="F:monosaccharide binding"/>
    <property type="evidence" value="ECO:0007669"/>
    <property type="project" value="TreeGrafter"/>
</dbReference>
<dbReference type="GO" id="GO:0061621">
    <property type="term" value="P:canonical glycolysis"/>
    <property type="evidence" value="ECO:0007669"/>
    <property type="project" value="TreeGrafter"/>
</dbReference>
<dbReference type="GO" id="GO:0030388">
    <property type="term" value="P:fructose 1,6-bisphosphate metabolic process"/>
    <property type="evidence" value="ECO:0007669"/>
    <property type="project" value="TreeGrafter"/>
</dbReference>
<dbReference type="GO" id="GO:0006002">
    <property type="term" value="P:fructose 6-phosphate metabolic process"/>
    <property type="evidence" value="ECO:0007669"/>
    <property type="project" value="InterPro"/>
</dbReference>
<dbReference type="CDD" id="cd00763">
    <property type="entry name" value="Bacterial_PFK"/>
    <property type="match status" value="1"/>
</dbReference>
<dbReference type="FunFam" id="3.40.50.450:FF:000001">
    <property type="entry name" value="ATP-dependent 6-phosphofructokinase"/>
    <property type="match status" value="1"/>
</dbReference>
<dbReference type="FunFam" id="3.40.50.460:FF:000002">
    <property type="entry name" value="ATP-dependent 6-phosphofructokinase"/>
    <property type="match status" value="1"/>
</dbReference>
<dbReference type="Gene3D" id="3.40.50.450">
    <property type="match status" value="1"/>
</dbReference>
<dbReference type="Gene3D" id="3.40.50.460">
    <property type="entry name" value="Phosphofructokinase domain"/>
    <property type="match status" value="1"/>
</dbReference>
<dbReference type="HAMAP" id="MF_00339">
    <property type="entry name" value="Phosphofructokinase_I_B1"/>
    <property type="match status" value="1"/>
</dbReference>
<dbReference type="InterPro" id="IPR022953">
    <property type="entry name" value="ATP_PFK"/>
</dbReference>
<dbReference type="InterPro" id="IPR012003">
    <property type="entry name" value="ATP_PFK_prok-type"/>
</dbReference>
<dbReference type="InterPro" id="IPR012828">
    <property type="entry name" value="PFKA_ATP_prok"/>
</dbReference>
<dbReference type="InterPro" id="IPR015912">
    <property type="entry name" value="Phosphofructokinase_CS"/>
</dbReference>
<dbReference type="InterPro" id="IPR000023">
    <property type="entry name" value="Phosphofructokinase_dom"/>
</dbReference>
<dbReference type="InterPro" id="IPR035966">
    <property type="entry name" value="PKF_sf"/>
</dbReference>
<dbReference type="NCBIfam" id="TIGR02482">
    <property type="entry name" value="PFKA_ATP"/>
    <property type="match status" value="1"/>
</dbReference>
<dbReference type="NCBIfam" id="NF002872">
    <property type="entry name" value="PRK03202.1"/>
    <property type="match status" value="1"/>
</dbReference>
<dbReference type="PANTHER" id="PTHR13697:SF4">
    <property type="entry name" value="ATP-DEPENDENT 6-PHOSPHOFRUCTOKINASE"/>
    <property type="match status" value="1"/>
</dbReference>
<dbReference type="PANTHER" id="PTHR13697">
    <property type="entry name" value="PHOSPHOFRUCTOKINASE"/>
    <property type="match status" value="1"/>
</dbReference>
<dbReference type="Pfam" id="PF00365">
    <property type="entry name" value="PFK"/>
    <property type="match status" value="1"/>
</dbReference>
<dbReference type="PIRSF" id="PIRSF000532">
    <property type="entry name" value="ATP_PFK_prok"/>
    <property type="match status" value="1"/>
</dbReference>
<dbReference type="PRINTS" id="PR00476">
    <property type="entry name" value="PHFRCTKINASE"/>
</dbReference>
<dbReference type="SUPFAM" id="SSF53784">
    <property type="entry name" value="Phosphofructokinase"/>
    <property type="match status" value="1"/>
</dbReference>
<dbReference type="PROSITE" id="PS00433">
    <property type="entry name" value="PHOSPHOFRUCTOKINASE"/>
    <property type="match status" value="1"/>
</dbReference>
<name>PFKA_GEOKA</name>
<keyword id="KW-0021">Allosteric enzyme</keyword>
<keyword id="KW-0067">ATP-binding</keyword>
<keyword id="KW-0963">Cytoplasm</keyword>
<keyword id="KW-0324">Glycolysis</keyword>
<keyword id="KW-0418">Kinase</keyword>
<keyword id="KW-0460">Magnesium</keyword>
<keyword id="KW-0479">Metal-binding</keyword>
<keyword id="KW-0547">Nucleotide-binding</keyword>
<keyword id="KW-1185">Reference proteome</keyword>
<keyword id="KW-0808">Transferase</keyword>
<evidence type="ECO:0000255" key="1">
    <source>
        <dbReference type="HAMAP-Rule" id="MF_00339"/>
    </source>
</evidence>
<proteinExistence type="inferred from homology"/>
<feature type="chain" id="PRO_1000059764" description="ATP-dependent 6-phosphofructokinase">
    <location>
        <begin position="1"/>
        <end position="319"/>
    </location>
</feature>
<feature type="active site" description="Proton acceptor" evidence="1">
    <location>
        <position position="127"/>
    </location>
</feature>
<feature type="binding site" evidence="1">
    <location>
        <position position="11"/>
    </location>
    <ligand>
        <name>ATP</name>
        <dbReference type="ChEBI" id="CHEBI:30616"/>
    </ligand>
</feature>
<feature type="binding site" evidence="1">
    <location>
        <begin position="21"/>
        <end position="25"/>
    </location>
    <ligand>
        <name>ADP</name>
        <dbReference type="ChEBI" id="CHEBI:456216"/>
        <note>allosteric activator; ligand shared between dimeric partners</note>
    </ligand>
</feature>
<feature type="binding site" evidence="1">
    <location>
        <begin position="72"/>
        <end position="73"/>
    </location>
    <ligand>
        <name>ATP</name>
        <dbReference type="ChEBI" id="CHEBI:30616"/>
    </ligand>
</feature>
<feature type="binding site" evidence="1">
    <location>
        <begin position="102"/>
        <end position="105"/>
    </location>
    <ligand>
        <name>ATP</name>
        <dbReference type="ChEBI" id="CHEBI:30616"/>
    </ligand>
</feature>
<feature type="binding site" evidence="1">
    <location>
        <position position="103"/>
    </location>
    <ligand>
        <name>Mg(2+)</name>
        <dbReference type="ChEBI" id="CHEBI:18420"/>
        <note>catalytic</note>
    </ligand>
</feature>
<feature type="binding site" description="in other chain" evidence="1">
    <location>
        <begin position="125"/>
        <end position="127"/>
    </location>
    <ligand>
        <name>substrate</name>
        <note>ligand shared between dimeric partners</note>
    </ligand>
</feature>
<feature type="binding site" description="in other chain" evidence="1">
    <location>
        <position position="154"/>
    </location>
    <ligand>
        <name>ADP</name>
        <dbReference type="ChEBI" id="CHEBI:456216"/>
        <note>allosteric activator; ligand shared between dimeric partners</note>
    </ligand>
</feature>
<feature type="binding site" evidence="1">
    <location>
        <position position="162"/>
    </location>
    <ligand>
        <name>substrate</name>
        <note>ligand shared between dimeric partners</note>
    </ligand>
</feature>
<feature type="binding site" description="in other chain" evidence="1">
    <location>
        <begin position="169"/>
        <end position="171"/>
    </location>
    <ligand>
        <name>substrate</name>
        <note>ligand shared between dimeric partners</note>
    </ligand>
</feature>
<feature type="binding site" description="in other chain" evidence="1">
    <location>
        <begin position="185"/>
        <end position="187"/>
    </location>
    <ligand>
        <name>ADP</name>
        <dbReference type="ChEBI" id="CHEBI:456216"/>
        <note>allosteric activator; ligand shared between dimeric partners</note>
    </ligand>
</feature>
<feature type="binding site" description="in other chain" evidence="1">
    <location>
        <position position="211"/>
    </location>
    <ligand>
        <name>ADP</name>
        <dbReference type="ChEBI" id="CHEBI:456216"/>
        <note>allosteric activator; ligand shared between dimeric partners</note>
    </ligand>
</feature>
<feature type="binding site" description="in other chain" evidence="1">
    <location>
        <begin position="213"/>
        <end position="215"/>
    </location>
    <ligand>
        <name>ADP</name>
        <dbReference type="ChEBI" id="CHEBI:456216"/>
        <note>allosteric activator; ligand shared between dimeric partners</note>
    </ligand>
</feature>
<feature type="binding site" description="in other chain" evidence="1">
    <location>
        <position position="222"/>
    </location>
    <ligand>
        <name>substrate</name>
        <note>ligand shared between dimeric partners</note>
    </ligand>
</feature>
<feature type="binding site" evidence="1">
    <location>
        <position position="243"/>
    </location>
    <ligand>
        <name>substrate</name>
        <note>ligand shared between dimeric partners</note>
    </ligand>
</feature>
<feature type="binding site" description="in other chain" evidence="1">
    <location>
        <begin position="249"/>
        <end position="252"/>
    </location>
    <ligand>
        <name>substrate</name>
        <note>ligand shared between dimeric partners</note>
    </ligand>
</feature>
<sequence>MKRIGVLTSGGDSPGMNAAIRAVVRKAIYHGVEVYGIYHGYAGLIAGNIKKLEVGDVGDIIHRGGTILYTARCPEFKTEEGQKKGIEQLKKHGIEGLVVIGGDGSYQGAKKLTEHGFPCVGVPGTIDNDIPGTDFTIGFDTALNTVIDAIDKIRDTATSHERTYVVEVMGRHAGDIALWSGLAGGAETILIPEADYDMDDIIARLKRGHERGKKHSIIIVAEGVGSGVDFGRQIQEATGFETRVTVLGHVQRGGSPTAFDRVLASRLGARAVELLLEGKGGRCVGIQNNQIVDHDIAEALAKTHTVDQRMYTLSKELSI</sequence>
<comment type="function">
    <text evidence="1">Catalyzes the phosphorylation of D-fructose 6-phosphate to fructose 1,6-bisphosphate by ATP, the first committing step of glycolysis.</text>
</comment>
<comment type="catalytic activity">
    <reaction evidence="1">
        <text>beta-D-fructose 6-phosphate + ATP = beta-D-fructose 1,6-bisphosphate + ADP + H(+)</text>
        <dbReference type="Rhea" id="RHEA:16109"/>
        <dbReference type="ChEBI" id="CHEBI:15378"/>
        <dbReference type="ChEBI" id="CHEBI:30616"/>
        <dbReference type="ChEBI" id="CHEBI:32966"/>
        <dbReference type="ChEBI" id="CHEBI:57634"/>
        <dbReference type="ChEBI" id="CHEBI:456216"/>
        <dbReference type="EC" id="2.7.1.11"/>
    </reaction>
</comment>
<comment type="cofactor">
    <cofactor evidence="1">
        <name>Mg(2+)</name>
        <dbReference type="ChEBI" id="CHEBI:18420"/>
    </cofactor>
</comment>
<comment type="activity regulation">
    <text evidence="1">Allosterically activated by ADP and other diphosphonucleosides, and allosterically inhibited by phosphoenolpyruvate.</text>
</comment>
<comment type="pathway">
    <text evidence="1">Carbohydrate degradation; glycolysis; D-glyceraldehyde 3-phosphate and glycerone phosphate from D-glucose: step 3/4.</text>
</comment>
<comment type="subunit">
    <text evidence="1">Homotetramer.</text>
</comment>
<comment type="subcellular location">
    <subcellularLocation>
        <location evidence="1">Cytoplasm</location>
    </subcellularLocation>
</comment>
<comment type="similarity">
    <text evidence="1">Belongs to the phosphofructokinase type A (PFKA) family. ATP-dependent PFK group I subfamily. Prokaryotic clade 'B1' sub-subfamily.</text>
</comment>
<reference key="1">
    <citation type="journal article" date="2004" name="Nucleic Acids Res.">
        <title>Thermoadaptation trait revealed by the genome sequence of thermophilic Geobacillus kaustophilus.</title>
        <authorList>
            <person name="Takami H."/>
            <person name="Takaki Y."/>
            <person name="Chee G.-J."/>
            <person name="Nishi S."/>
            <person name="Shimamura S."/>
            <person name="Suzuki H."/>
            <person name="Matsui S."/>
            <person name="Uchiyama I."/>
        </authorList>
    </citation>
    <scope>NUCLEOTIDE SEQUENCE [LARGE SCALE GENOMIC DNA]</scope>
    <source>
        <strain>HTA426</strain>
    </source>
</reference>
<gene>
    <name evidence="1" type="primary">pfkA</name>
    <name type="ordered locus">GK2740</name>
</gene>
<organism>
    <name type="scientific">Geobacillus kaustophilus (strain HTA426)</name>
    <dbReference type="NCBI Taxonomy" id="235909"/>
    <lineage>
        <taxon>Bacteria</taxon>
        <taxon>Bacillati</taxon>
        <taxon>Bacillota</taxon>
        <taxon>Bacilli</taxon>
        <taxon>Bacillales</taxon>
        <taxon>Anoxybacillaceae</taxon>
        <taxon>Geobacillus</taxon>
        <taxon>Geobacillus thermoleovorans group</taxon>
    </lineage>
</organism>
<accession>Q5KWB1</accession>
<protein>
    <recommendedName>
        <fullName evidence="1">ATP-dependent 6-phosphofructokinase</fullName>
        <shortName evidence="1">ATP-PFK</shortName>
        <shortName evidence="1">Phosphofructokinase</shortName>
        <ecNumber evidence="1">2.7.1.11</ecNumber>
    </recommendedName>
    <alternativeName>
        <fullName evidence="1">Phosphohexokinase</fullName>
    </alternativeName>
</protein>